<organism>
    <name type="scientific">Homo sapiens</name>
    <name type="common">Human</name>
    <dbReference type="NCBI Taxonomy" id="9606"/>
    <lineage>
        <taxon>Eukaryota</taxon>
        <taxon>Metazoa</taxon>
        <taxon>Chordata</taxon>
        <taxon>Craniata</taxon>
        <taxon>Vertebrata</taxon>
        <taxon>Euteleostomi</taxon>
        <taxon>Mammalia</taxon>
        <taxon>Eutheria</taxon>
        <taxon>Euarchontoglires</taxon>
        <taxon>Primates</taxon>
        <taxon>Haplorrhini</taxon>
        <taxon>Catarrhini</taxon>
        <taxon>Hominidae</taxon>
        <taxon>Homo</taxon>
    </lineage>
</organism>
<feature type="chain" id="PRO_0000342343" description="Rho guanine nucleotide exchange factor 33">
    <location>
        <begin position="1"/>
        <end position="844"/>
    </location>
</feature>
<feature type="domain" description="DH" evidence="4">
    <location>
        <begin position="265"/>
        <end position="440"/>
    </location>
</feature>
<feature type="region of interest" description="Disordered" evidence="5">
    <location>
        <begin position="1"/>
        <end position="20"/>
    </location>
</feature>
<feature type="region of interest" description="Disordered" evidence="5">
    <location>
        <begin position="101"/>
        <end position="142"/>
    </location>
</feature>
<feature type="region of interest" description="Disordered" evidence="5">
    <location>
        <begin position="169"/>
        <end position="189"/>
    </location>
</feature>
<feature type="region of interest" description="Disordered" evidence="5">
    <location>
        <begin position="498"/>
        <end position="541"/>
    </location>
</feature>
<feature type="region of interest" description="Disordered" evidence="5">
    <location>
        <begin position="668"/>
        <end position="687"/>
    </location>
</feature>
<feature type="region of interest" description="Disordered" evidence="5">
    <location>
        <begin position="702"/>
        <end position="745"/>
    </location>
</feature>
<feature type="region of interest" description="Disordered" evidence="5">
    <location>
        <begin position="787"/>
        <end position="844"/>
    </location>
</feature>
<feature type="coiled-coil region" evidence="3">
    <location>
        <begin position="54"/>
        <end position="129"/>
    </location>
</feature>
<feature type="compositionally biased region" description="Basic and acidic residues" evidence="5">
    <location>
        <begin position="1"/>
        <end position="13"/>
    </location>
</feature>
<feature type="compositionally biased region" description="Basic and acidic residues" evidence="5">
    <location>
        <begin position="101"/>
        <end position="113"/>
    </location>
</feature>
<feature type="compositionally biased region" description="Polar residues" evidence="5">
    <location>
        <begin position="130"/>
        <end position="142"/>
    </location>
</feature>
<feature type="compositionally biased region" description="Basic and acidic residues" evidence="5">
    <location>
        <begin position="787"/>
        <end position="800"/>
    </location>
</feature>
<feature type="compositionally biased region" description="Basic residues" evidence="5">
    <location>
        <begin position="820"/>
        <end position="829"/>
    </location>
</feature>
<feature type="modified residue" description="Omega-N-methylarginine" evidence="2">
    <location>
        <position position="757"/>
    </location>
</feature>
<feature type="splice variant" id="VSP_044905" description="In isoform 2." evidence="6">
    <original>NGNATGEDFCGPWGWW</original>
    <variation>SSGSEYREKTNENPSMDPSPTKQDFFRNRLALANDLDQGTAV</variation>
    <location>
        <begin position="829"/>
        <end position="844"/>
    </location>
</feature>
<proteinExistence type="evidence at protein level"/>
<comment type="function">
    <text evidence="1">May act as a guanine-nucleotide releasing factor.</text>
</comment>
<comment type="alternative products">
    <event type="alternative splicing"/>
    <isoform>
        <id>A8MVX0-1</id>
        <name>1</name>
        <sequence type="displayed"/>
    </isoform>
    <isoform>
        <id>A8MVX0-2</id>
        <name>2</name>
        <sequence type="described" ref="VSP_044905"/>
    </isoform>
</comment>
<comment type="sequence caution" evidence="7">
    <conflict type="frameshift">
        <sequence resource="EMBL" id="DV080278"/>
    </conflict>
</comment>
<reference key="1">
    <citation type="journal article" date="2005" name="Nature">
        <title>Generation and annotation of the DNA sequences of human chromosomes 2 and 4.</title>
        <authorList>
            <person name="Hillier L.W."/>
            <person name="Graves T.A."/>
            <person name="Fulton R.S."/>
            <person name="Fulton L.A."/>
            <person name="Pepin K.H."/>
            <person name="Minx P."/>
            <person name="Wagner-McPherson C."/>
            <person name="Layman D."/>
            <person name="Wylie K."/>
            <person name="Sekhon M."/>
            <person name="Becker M.C."/>
            <person name="Fewell G.A."/>
            <person name="Delehaunty K.D."/>
            <person name="Miner T.L."/>
            <person name="Nash W.E."/>
            <person name="Kremitzki C."/>
            <person name="Oddy L."/>
            <person name="Du H."/>
            <person name="Sun H."/>
            <person name="Bradshaw-Cordum H."/>
            <person name="Ali J."/>
            <person name="Carter J."/>
            <person name="Cordes M."/>
            <person name="Harris A."/>
            <person name="Isak A."/>
            <person name="van Brunt A."/>
            <person name="Nguyen C."/>
            <person name="Du F."/>
            <person name="Courtney L."/>
            <person name="Kalicki J."/>
            <person name="Ozersky P."/>
            <person name="Abbott S."/>
            <person name="Armstrong J."/>
            <person name="Belter E.A."/>
            <person name="Caruso L."/>
            <person name="Cedroni M."/>
            <person name="Cotton M."/>
            <person name="Davidson T."/>
            <person name="Desai A."/>
            <person name="Elliott G."/>
            <person name="Erb T."/>
            <person name="Fronick C."/>
            <person name="Gaige T."/>
            <person name="Haakenson W."/>
            <person name="Haglund K."/>
            <person name="Holmes A."/>
            <person name="Harkins R."/>
            <person name="Kim K."/>
            <person name="Kruchowski S.S."/>
            <person name="Strong C.M."/>
            <person name="Grewal N."/>
            <person name="Goyea E."/>
            <person name="Hou S."/>
            <person name="Levy A."/>
            <person name="Martinka S."/>
            <person name="Mead K."/>
            <person name="McLellan M.D."/>
            <person name="Meyer R."/>
            <person name="Randall-Maher J."/>
            <person name="Tomlinson C."/>
            <person name="Dauphin-Kohlberg S."/>
            <person name="Kozlowicz-Reilly A."/>
            <person name="Shah N."/>
            <person name="Swearengen-Shahid S."/>
            <person name="Snider J."/>
            <person name="Strong J.T."/>
            <person name="Thompson J."/>
            <person name="Yoakum M."/>
            <person name="Leonard S."/>
            <person name="Pearman C."/>
            <person name="Trani L."/>
            <person name="Radionenko M."/>
            <person name="Waligorski J.E."/>
            <person name="Wang C."/>
            <person name="Rock S.M."/>
            <person name="Tin-Wollam A.-M."/>
            <person name="Maupin R."/>
            <person name="Latreille P."/>
            <person name="Wendl M.C."/>
            <person name="Yang S.-P."/>
            <person name="Pohl C."/>
            <person name="Wallis J.W."/>
            <person name="Spieth J."/>
            <person name="Bieri T.A."/>
            <person name="Berkowicz N."/>
            <person name="Nelson J.O."/>
            <person name="Osborne J."/>
            <person name="Ding L."/>
            <person name="Meyer R."/>
            <person name="Sabo A."/>
            <person name="Shotland Y."/>
            <person name="Sinha P."/>
            <person name="Wohldmann P.E."/>
            <person name="Cook L.L."/>
            <person name="Hickenbotham M.T."/>
            <person name="Eldred J."/>
            <person name="Williams D."/>
            <person name="Jones T.A."/>
            <person name="She X."/>
            <person name="Ciccarelli F.D."/>
            <person name="Izaurralde E."/>
            <person name="Taylor J."/>
            <person name="Schmutz J."/>
            <person name="Myers R.M."/>
            <person name="Cox D.R."/>
            <person name="Huang X."/>
            <person name="McPherson J.D."/>
            <person name="Mardis E.R."/>
            <person name="Clifton S.W."/>
            <person name="Warren W.C."/>
            <person name="Chinwalla A.T."/>
            <person name="Eddy S.R."/>
            <person name="Marra M.A."/>
            <person name="Ovcharenko I."/>
            <person name="Furey T.S."/>
            <person name="Miller W."/>
            <person name="Eichler E.E."/>
            <person name="Bork P."/>
            <person name="Suyama M."/>
            <person name="Torrents D."/>
            <person name="Waterston R.H."/>
            <person name="Wilson R.K."/>
        </authorList>
    </citation>
    <scope>NUCLEOTIDE SEQUENCE [LARGE SCALE GENOMIC DNA]</scope>
</reference>
<reference key="2">
    <citation type="submission" date="2005-09" db="EMBL/GenBank/DDBJ databases">
        <title>Exhaustive RT-PCR and sequencing of all novel TWINSCAN predictions in human.</title>
        <authorList>
            <person name="Stevens M."/>
            <person name="Wei C."/>
            <person name="Gross S.S."/>
            <person name="McPherson J."/>
            <person name="Brent M.R."/>
        </authorList>
    </citation>
    <scope>NUCLEOTIDE SEQUENCE [LARGE SCALE MRNA] OF 1-83 (ISOFORM 1/2)</scope>
</reference>
<reference key="3">
    <citation type="journal article" date="2004" name="Nat. Genet.">
        <title>Complete sequencing and characterization of 21,243 full-length human cDNAs.</title>
        <authorList>
            <person name="Ota T."/>
            <person name="Suzuki Y."/>
            <person name="Nishikawa T."/>
            <person name="Otsuki T."/>
            <person name="Sugiyama T."/>
            <person name="Irie R."/>
            <person name="Wakamatsu A."/>
            <person name="Hayashi K."/>
            <person name="Sato H."/>
            <person name="Nagai K."/>
            <person name="Kimura K."/>
            <person name="Makita H."/>
            <person name="Sekine M."/>
            <person name="Obayashi M."/>
            <person name="Nishi T."/>
            <person name="Shibahara T."/>
            <person name="Tanaka T."/>
            <person name="Ishii S."/>
            <person name="Yamamoto J."/>
            <person name="Saito K."/>
            <person name="Kawai Y."/>
            <person name="Isono Y."/>
            <person name="Nakamura Y."/>
            <person name="Nagahari K."/>
            <person name="Murakami K."/>
            <person name="Yasuda T."/>
            <person name="Iwayanagi T."/>
            <person name="Wagatsuma M."/>
            <person name="Shiratori A."/>
            <person name="Sudo H."/>
            <person name="Hosoiri T."/>
            <person name="Kaku Y."/>
            <person name="Kodaira H."/>
            <person name="Kondo H."/>
            <person name="Sugawara M."/>
            <person name="Takahashi M."/>
            <person name="Kanda K."/>
            <person name="Yokoi T."/>
            <person name="Furuya T."/>
            <person name="Kikkawa E."/>
            <person name="Omura Y."/>
            <person name="Abe K."/>
            <person name="Kamihara K."/>
            <person name="Katsuta N."/>
            <person name="Sato K."/>
            <person name="Tanikawa M."/>
            <person name="Yamazaki M."/>
            <person name="Ninomiya K."/>
            <person name="Ishibashi T."/>
            <person name="Yamashita H."/>
            <person name="Murakawa K."/>
            <person name="Fujimori K."/>
            <person name="Tanai H."/>
            <person name="Kimata M."/>
            <person name="Watanabe M."/>
            <person name="Hiraoka S."/>
            <person name="Chiba Y."/>
            <person name="Ishida S."/>
            <person name="Ono Y."/>
            <person name="Takiguchi S."/>
            <person name="Watanabe S."/>
            <person name="Yosida M."/>
            <person name="Hotuta T."/>
            <person name="Kusano J."/>
            <person name="Kanehori K."/>
            <person name="Takahashi-Fujii A."/>
            <person name="Hara H."/>
            <person name="Tanase T.-O."/>
            <person name="Nomura Y."/>
            <person name="Togiya S."/>
            <person name="Komai F."/>
            <person name="Hara R."/>
            <person name="Takeuchi K."/>
            <person name="Arita M."/>
            <person name="Imose N."/>
            <person name="Musashino K."/>
            <person name="Yuuki H."/>
            <person name="Oshima A."/>
            <person name="Sasaki N."/>
            <person name="Aotsuka S."/>
            <person name="Yoshikawa Y."/>
            <person name="Matsunawa H."/>
            <person name="Ichihara T."/>
            <person name="Shiohata N."/>
            <person name="Sano S."/>
            <person name="Moriya S."/>
            <person name="Momiyama H."/>
            <person name="Satoh N."/>
            <person name="Takami S."/>
            <person name="Terashima Y."/>
            <person name="Suzuki O."/>
            <person name="Nakagawa S."/>
            <person name="Senoh A."/>
            <person name="Mizoguchi H."/>
            <person name="Goto Y."/>
            <person name="Shimizu F."/>
            <person name="Wakebe H."/>
            <person name="Hishigaki H."/>
            <person name="Watanabe T."/>
            <person name="Sugiyama A."/>
            <person name="Takemoto M."/>
            <person name="Kawakami B."/>
            <person name="Yamazaki M."/>
            <person name="Watanabe K."/>
            <person name="Kumagai A."/>
            <person name="Itakura S."/>
            <person name="Fukuzumi Y."/>
            <person name="Fujimori Y."/>
            <person name="Komiyama M."/>
            <person name="Tashiro H."/>
            <person name="Tanigami A."/>
            <person name="Fujiwara T."/>
            <person name="Ono T."/>
            <person name="Yamada K."/>
            <person name="Fujii Y."/>
            <person name="Ozaki K."/>
            <person name="Hirao M."/>
            <person name="Ohmori Y."/>
            <person name="Kawabata A."/>
            <person name="Hikiji T."/>
            <person name="Kobatake N."/>
            <person name="Inagaki H."/>
            <person name="Ikema Y."/>
            <person name="Okamoto S."/>
            <person name="Okitani R."/>
            <person name="Kawakami T."/>
            <person name="Noguchi S."/>
            <person name="Itoh T."/>
            <person name="Shigeta K."/>
            <person name="Senba T."/>
            <person name="Matsumura K."/>
            <person name="Nakajima Y."/>
            <person name="Mizuno T."/>
            <person name="Morinaga M."/>
            <person name="Sasaki M."/>
            <person name="Togashi T."/>
            <person name="Oyama M."/>
            <person name="Hata H."/>
            <person name="Watanabe M."/>
            <person name="Komatsu T."/>
            <person name="Mizushima-Sugano J."/>
            <person name="Satoh T."/>
            <person name="Shirai Y."/>
            <person name="Takahashi Y."/>
            <person name="Nakagawa K."/>
            <person name="Okumura K."/>
            <person name="Nagase T."/>
            <person name="Nomura N."/>
            <person name="Kikuchi H."/>
            <person name="Masuho Y."/>
            <person name="Yamashita R."/>
            <person name="Nakai K."/>
            <person name="Yada T."/>
            <person name="Nakamura Y."/>
            <person name="Ohara O."/>
            <person name="Isogai T."/>
            <person name="Sugano S."/>
        </authorList>
    </citation>
    <scope>NUCLEOTIDE SEQUENCE [LARGE SCALE MRNA] OF 747-844 (ISOFORM 2)</scope>
    <source>
        <tissue>Caudate nucleus</tissue>
    </source>
</reference>
<dbReference type="EMBL" id="AC018693">
    <property type="status" value="NOT_ANNOTATED_CDS"/>
    <property type="molecule type" value="Genomic_DNA"/>
</dbReference>
<dbReference type="EMBL" id="AC019171">
    <property type="status" value="NOT_ANNOTATED_CDS"/>
    <property type="molecule type" value="Genomic_DNA"/>
</dbReference>
<dbReference type="EMBL" id="DV080278">
    <property type="status" value="NOT_ANNOTATED_CDS"/>
    <property type="molecule type" value="mRNA"/>
</dbReference>
<dbReference type="EMBL" id="AK123375">
    <property type="status" value="NOT_ANNOTATED_CDS"/>
    <property type="molecule type" value="mRNA"/>
</dbReference>
<dbReference type="CCDS" id="CCDS46263.2">
    <molecule id="A8MVX0-2"/>
</dbReference>
<dbReference type="RefSeq" id="NP_001138923.2">
    <molecule id="A8MVX0-2"/>
    <property type="nucleotide sequence ID" value="NM_001145451.5"/>
</dbReference>
<dbReference type="RefSeq" id="NP_001354552.1">
    <molecule id="A8MVX0-1"/>
    <property type="nucleotide sequence ID" value="NM_001367623.3"/>
</dbReference>
<dbReference type="SMR" id="A8MVX0"/>
<dbReference type="BioGRID" id="938496">
    <property type="interactions" value="5"/>
</dbReference>
<dbReference type="FunCoup" id="A8MVX0">
    <property type="interactions" value="217"/>
</dbReference>
<dbReference type="STRING" id="9606.ENSP00000387020"/>
<dbReference type="GlyGen" id="A8MVX0">
    <property type="glycosylation" value="1 site, 1 O-linked glycan (1 site)"/>
</dbReference>
<dbReference type="iPTMnet" id="A8MVX0"/>
<dbReference type="PhosphoSitePlus" id="A8MVX0"/>
<dbReference type="BioMuta" id="ARHGEF33"/>
<dbReference type="jPOST" id="A8MVX0"/>
<dbReference type="MassIVE" id="A8MVX0"/>
<dbReference type="PaxDb" id="9606-ENSP00000387020"/>
<dbReference type="PeptideAtlas" id="A8MVX0"/>
<dbReference type="ProteomicsDB" id="2212">
    <molecule id="A8MVX0-1"/>
</dbReference>
<dbReference type="Antibodypedia" id="49385">
    <property type="antibodies" value="58 antibodies from 12 providers"/>
</dbReference>
<dbReference type="DNASU" id="100271715"/>
<dbReference type="Ensembl" id="ENST00000398800.8">
    <molecule id="A8MVX0-2"/>
    <property type="protein sequence ID" value="ENSP00000381780.4"/>
    <property type="gene ID" value="ENSG00000214694.13"/>
</dbReference>
<dbReference type="Ensembl" id="ENST00000409978.7">
    <molecule id="A8MVX0-2"/>
    <property type="protein sequence ID" value="ENSP00000387020.1"/>
    <property type="gene ID" value="ENSG00000214694.13"/>
</dbReference>
<dbReference type="GeneID" id="100271715"/>
<dbReference type="KEGG" id="hsa:100271715"/>
<dbReference type="MANE-Select" id="ENST00000409978.7">
    <molecule id="A8MVX0-2"/>
    <property type="protein sequence ID" value="ENSP00000387020.1"/>
    <property type="RefSeq nucleotide sequence ID" value="NM_001145451.5"/>
    <property type="RefSeq protein sequence ID" value="NP_001138923.2"/>
</dbReference>
<dbReference type="UCSC" id="uc021vgd.2">
    <molecule id="A8MVX0-1"/>
    <property type="organism name" value="human"/>
</dbReference>
<dbReference type="AGR" id="HGNC:37252"/>
<dbReference type="CTD" id="100271715"/>
<dbReference type="DisGeNET" id="100271715"/>
<dbReference type="GeneCards" id="ARHGEF33"/>
<dbReference type="HGNC" id="HGNC:37252">
    <property type="gene designation" value="ARHGEF33"/>
</dbReference>
<dbReference type="HPA" id="ENSG00000214694">
    <property type="expression patterns" value="Tissue enhanced (brain, testis)"/>
</dbReference>
<dbReference type="neXtProt" id="NX_A8MVX0"/>
<dbReference type="VEuPathDB" id="HostDB:ENSG00000214694"/>
<dbReference type="eggNOG" id="ENOG502RVY2">
    <property type="taxonomic scope" value="Eukaryota"/>
</dbReference>
<dbReference type="GeneTree" id="ENSGT00940000162759"/>
<dbReference type="HOGENOM" id="CLU_018772_0_0_1"/>
<dbReference type="InParanoid" id="A8MVX0"/>
<dbReference type="OMA" id="LEHANMV"/>
<dbReference type="OrthoDB" id="8828665at2759"/>
<dbReference type="PAN-GO" id="A8MVX0">
    <property type="GO annotations" value="0 GO annotations based on evolutionary models"/>
</dbReference>
<dbReference type="PhylomeDB" id="A8MVX0"/>
<dbReference type="PathwayCommons" id="A8MVX0"/>
<dbReference type="Reactome" id="R-HSA-193648">
    <property type="pathway name" value="NRAGE signals death through JNK"/>
</dbReference>
<dbReference type="Reactome" id="R-HSA-416482">
    <property type="pathway name" value="G alpha (12/13) signalling events"/>
</dbReference>
<dbReference type="BioGRID-ORCS" id="100271715">
    <property type="hits" value="22 hits in 1139 CRISPR screens"/>
</dbReference>
<dbReference type="ChiTaRS" id="ARHGEF33">
    <property type="organism name" value="human"/>
</dbReference>
<dbReference type="GenomeRNAi" id="100271715"/>
<dbReference type="Pharos" id="A8MVX0">
    <property type="development level" value="Tdark"/>
</dbReference>
<dbReference type="PRO" id="PR:A8MVX0"/>
<dbReference type="Proteomes" id="UP000005640">
    <property type="component" value="Chromosome 2"/>
</dbReference>
<dbReference type="RNAct" id="A8MVX0">
    <property type="molecule type" value="protein"/>
</dbReference>
<dbReference type="Bgee" id="ENSG00000214694">
    <property type="expression patterns" value="Expressed in right hemisphere of cerebellum and 99 other cell types or tissues"/>
</dbReference>
<dbReference type="ExpressionAtlas" id="A8MVX0">
    <property type="expression patterns" value="baseline and differential"/>
</dbReference>
<dbReference type="GO" id="GO:0005085">
    <property type="term" value="F:guanyl-nucleotide exchange factor activity"/>
    <property type="evidence" value="ECO:0007669"/>
    <property type="project" value="UniProtKB-KW"/>
</dbReference>
<dbReference type="Gene3D" id="1.20.900.10">
    <property type="entry name" value="Dbl homology (DH) domain"/>
    <property type="match status" value="1"/>
</dbReference>
<dbReference type="InterPro" id="IPR042849">
    <property type="entry name" value="ARHGEF33"/>
</dbReference>
<dbReference type="InterPro" id="IPR035899">
    <property type="entry name" value="DBL_dom_sf"/>
</dbReference>
<dbReference type="InterPro" id="IPR000219">
    <property type="entry name" value="DH_dom"/>
</dbReference>
<dbReference type="PANTHER" id="PTHR46944">
    <property type="entry name" value="RHO GUANINE NUCLEOTIDE EXCHANGE FACTOR 33"/>
    <property type="match status" value="1"/>
</dbReference>
<dbReference type="PANTHER" id="PTHR46944:SF1">
    <property type="entry name" value="RHO GUANINE NUCLEOTIDE EXCHANGE FACTOR 33"/>
    <property type="match status" value="1"/>
</dbReference>
<dbReference type="Pfam" id="PF00621">
    <property type="entry name" value="RhoGEF"/>
    <property type="match status" value="1"/>
</dbReference>
<dbReference type="SMART" id="SM00325">
    <property type="entry name" value="RhoGEF"/>
    <property type="match status" value="1"/>
</dbReference>
<dbReference type="SUPFAM" id="SSF48065">
    <property type="entry name" value="DBL homology domain (DH-domain)"/>
    <property type="match status" value="1"/>
</dbReference>
<dbReference type="PROSITE" id="PS50010">
    <property type="entry name" value="DH_2"/>
    <property type="match status" value="1"/>
</dbReference>
<protein>
    <recommendedName>
        <fullName>Rho guanine nucleotide exchange factor 33</fullName>
    </recommendedName>
</protein>
<name>ARG33_HUMAN</name>
<accession>A8MVX0</accession>
<accession>J3KPX2</accession>
<keyword id="KW-0025">Alternative splicing</keyword>
<keyword id="KW-0175">Coiled coil</keyword>
<keyword id="KW-0344">Guanine-nucleotide releasing factor</keyword>
<keyword id="KW-0488">Methylation</keyword>
<keyword id="KW-1267">Proteomics identification</keyword>
<keyword id="KW-1185">Reference proteome</keyword>
<evidence type="ECO:0000250" key="1"/>
<evidence type="ECO:0000250" key="2">
    <source>
        <dbReference type="UniProtKB" id="Q8BW86"/>
    </source>
</evidence>
<evidence type="ECO:0000255" key="3"/>
<evidence type="ECO:0000255" key="4">
    <source>
        <dbReference type="PROSITE-ProRule" id="PRU00062"/>
    </source>
</evidence>
<evidence type="ECO:0000256" key="5">
    <source>
        <dbReference type="SAM" id="MobiDB-lite"/>
    </source>
</evidence>
<evidence type="ECO:0000303" key="6">
    <source>
    </source>
</evidence>
<evidence type="ECO:0000305" key="7"/>
<gene>
    <name type="primary">ARHGEF33</name>
</gene>
<sequence length="844" mass="94633">MEKTKTKQGENEHMPVNNPSTQIYQLQALASELKTGFTEAMQELSRIQHGEYALEEKVKSCRCSMEEKVTEMKNSLNYFKEELSNAMSMIQAITSKQEEMQQKIEQLQQEKRRESRKVKAKKTQKEEHSSQAGPAQAQGSPFRSINIPEPVLPSEDFTNLLPSQAYEKAQESRSVHVGDSNVKGMMGPGVNPTTPEAEENLKSCLSADIQSKGHLPSGMWRQPKDGKEWGEEYVTKDHPDKLKEAGQGRHSSLENVLCETSLAAKRQTVALELLESERKYVINISLILKIKATFQGSDGKRNSKERSLFPGSLRYLVQQHLDLLHALQERVLKWPRQGVLGDLFLKLTNDENNFLDYYVAYLRDLPECISLVHVVVLKEGDEEIKSDIYTLFFHIVQRIPEYLIHLQNVLKFTEQEHPDYYLLLVCVQRLRVFISHYTLLFQCNEDLLIQKRKKLKKSSMAKLYKGLASQCANAGQDASPTAGPEAVRDTGIHSEELLQPYPSAPSSGPAITHLMPPVKKSQQQQSLMESMQPGKPSDWELEGRKHERPESLLAPTQFCAAEQDVKALAGPLQAIPEMDFESSPAEPLGNVERSLRAPAELLPDARGFVPAAYEEFEYGGEIFALPAPYDEEPFQAPALFENCSPASSESSLDICFLRPVSFAMEAERPEHPLQPLPKSATSPAGSSSAYKLEAAAQAHGKAKPLSRSLKEFPRAPPADGVAPRLYSTRSSSGGRAPIKAERAAQAHGPAAAAVAARGASRTFFPQQRSQSEKQTYLEVRREMHLEDTTRFCPKEERESEQTSFSDQNPRQDQKGGFRSSFRKLFKKKNGNATGEDFCGPWGWW</sequence>